<keyword id="KW-0002">3D-structure</keyword>
<keyword id="KW-0067">ATP-binding</keyword>
<keyword id="KW-0903">Direct protein sequencing</keyword>
<keyword id="KW-0238">DNA-binding</keyword>
<keyword id="KW-0378">Hydrolase</keyword>
<keyword id="KW-0496">Mitochondrion</keyword>
<keyword id="KW-0547">Nucleotide-binding</keyword>
<keyword id="KW-0645">Protease</keyword>
<keyword id="KW-1185">Reference proteome</keyword>
<keyword id="KW-0720">Serine protease</keyword>
<keyword id="KW-0809">Transit peptide</keyword>
<feature type="transit peptide" description="Mitochondrion" evidence="1">
    <location>
        <begin position="1"/>
        <end position="37"/>
    </location>
</feature>
<feature type="propeptide" id="PRO_0000395761" description="Removed in mature form; by autocatalysis" evidence="1 17 18">
    <location>
        <begin position="38"/>
        <end position="98"/>
    </location>
</feature>
<feature type="chain" id="PRO_0000026733" description="Lon protease homolog, mitochondrial">
    <location>
        <begin position="99"/>
        <end position="1133"/>
    </location>
</feature>
<feature type="domain" description="Lon N-terminal" evidence="3">
    <location>
        <begin position="182"/>
        <end position="480"/>
    </location>
</feature>
<feature type="domain" description="Lon proteolytic" evidence="2">
    <location>
        <begin position="923"/>
        <end position="1109"/>
    </location>
</feature>
<feature type="region of interest" description="Disordered" evidence="4">
    <location>
        <begin position="98"/>
        <end position="176"/>
    </location>
</feature>
<feature type="region of interest" description="Disordered" evidence="4">
    <location>
        <begin position="282"/>
        <end position="358"/>
    </location>
</feature>
<feature type="region of interest" description="Dispensable for catalytic activity" evidence="12">
    <location>
        <begin position="839"/>
        <end position="892"/>
    </location>
</feature>
<feature type="region of interest" description="Disordered" evidence="4">
    <location>
        <begin position="844"/>
        <end position="889"/>
    </location>
</feature>
<feature type="compositionally biased region" description="Basic and acidic residues" evidence="4">
    <location>
        <begin position="98"/>
        <end position="117"/>
    </location>
</feature>
<feature type="compositionally biased region" description="Basic and acidic residues" evidence="4">
    <location>
        <begin position="125"/>
        <end position="143"/>
    </location>
</feature>
<feature type="compositionally biased region" description="Low complexity" evidence="4">
    <location>
        <begin position="145"/>
        <end position="166"/>
    </location>
</feature>
<feature type="compositionally biased region" description="Basic and acidic residues" evidence="4">
    <location>
        <begin position="282"/>
        <end position="301"/>
    </location>
</feature>
<feature type="compositionally biased region" description="Basic and acidic residues" evidence="4">
    <location>
        <begin position="325"/>
        <end position="340"/>
    </location>
</feature>
<feature type="compositionally biased region" description="Acidic residues" evidence="4">
    <location>
        <begin position="348"/>
        <end position="358"/>
    </location>
</feature>
<feature type="compositionally biased region" description="Basic and acidic residues" evidence="4">
    <location>
        <begin position="853"/>
        <end position="889"/>
    </location>
</feature>
<feature type="active site" evidence="1">
    <location>
        <position position="1015"/>
    </location>
</feature>
<feature type="active site" evidence="1">
    <location>
        <position position="1058"/>
    </location>
</feature>
<feature type="binding site" evidence="1 12 22">
    <location>
        <begin position="632"/>
        <end position="639"/>
    </location>
    <ligand>
        <name>ATP</name>
        <dbReference type="ChEBI" id="CHEBI:30616"/>
    </ligand>
</feature>
<feature type="mutagenesis site" description="Abolishes ATP-binding." evidence="16 17">
    <original>K</original>
    <variation>N</variation>
    <location>
        <position position="638"/>
    </location>
</feature>
<feature type="mutagenesis site" description="Abolishes peptidase activity." evidence="12 16 17">
    <original>S</original>
    <variation>A</variation>
    <location>
        <position position="1015"/>
    </location>
</feature>
<feature type="sequence conflict" description="In Ref. 2; AAA53625." evidence="19" ref="2">
    <original>Q</original>
    <variation>R</variation>
    <location>
        <position position="509"/>
    </location>
</feature>
<feature type="helix" evidence="23">
    <location>
        <begin position="531"/>
        <end position="537"/>
    </location>
</feature>
<feature type="helix" evidence="23">
    <location>
        <begin position="541"/>
        <end position="555"/>
    </location>
</feature>
<feature type="strand" evidence="23">
    <location>
        <begin position="559"/>
        <end position="561"/>
    </location>
</feature>
<feature type="helix" evidence="23">
    <location>
        <begin position="562"/>
        <end position="576"/>
    </location>
</feature>
<feature type="helix" evidence="23">
    <location>
        <begin position="589"/>
        <end position="599"/>
    </location>
</feature>
<feature type="helix" evidence="23">
    <location>
        <begin position="604"/>
        <end position="618"/>
    </location>
</feature>
<feature type="strand" evidence="23">
    <location>
        <begin position="627"/>
        <end position="631"/>
    </location>
</feature>
<feature type="turn" evidence="23">
    <location>
        <begin position="638"/>
        <end position="640"/>
    </location>
</feature>
<feature type="helix" evidence="23">
    <location>
        <begin position="641"/>
        <end position="648"/>
    </location>
</feature>
<feature type="strand" evidence="23">
    <location>
        <begin position="653"/>
        <end position="656"/>
    </location>
</feature>
<feature type="helix" evidence="23">
    <location>
        <begin position="665"/>
        <end position="668"/>
    </location>
</feature>
<feature type="helix" evidence="23">
    <location>
        <begin position="681"/>
        <end position="689"/>
    </location>
</feature>
<feature type="strand" evidence="23">
    <location>
        <begin position="691"/>
        <end position="693"/>
    </location>
</feature>
<feature type="strand" evidence="23">
    <location>
        <begin position="695"/>
        <end position="698"/>
    </location>
</feature>
<feature type="strand" evidence="23">
    <location>
        <begin position="708"/>
        <end position="710"/>
    </location>
</feature>
<feature type="helix" evidence="23">
    <location>
        <begin position="713"/>
        <end position="721"/>
    </location>
</feature>
<feature type="turn" evidence="23">
    <location>
        <begin position="723"/>
        <end position="725"/>
    </location>
</feature>
<feature type="helix" evidence="23">
    <location>
        <begin position="726"/>
        <end position="728"/>
    </location>
</feature>
<feature type="strand" evidence="23">
    <location>
        <begin position="732"/>
        <end position="734"/>
    </location>
</feature>
<feature type="strand" evidence="23">
    <location>
        <begin position="743"/>
        <end position="750"/>
    </location>
</feature>
<feature type="helix" evidence="23">
    <location>
        <begin position="757"/>
        <end position="762"/>
    </location>
</feature>
<feature type="strand" evidence="23">
    <location>
        <begin position="763"/>
        <end position="767"/>
    </location>
</feature>
<feature type="helix" evidence="23">
    <location>
        <begin position="773"/>
        <end position="791"/>
    </location>
</feature>
<feature type="turn" evidence="23">
    <location>
        <begin position="796"/>
        <end position="798"/>
    </location>
</feature>
<feature type="strand" evidence="23">
    <location>
        <begin position="799"/>
        <end position="801"/>
    </location>
</feature>
<feature type="helix" evidence="23">
    <location>
        <begin position="803"/>
        <end position="812"/>
    </location>
</feature>
<feature type="helix" evidence="23">
    <location>
        <begin position="820"/>
        <end position="839"/>
    </location>
</feature>
<feature type="strand" evidence="23">
    <location>
        <begin position="899"/>
        <end position="901"/>
    </location>
</feature>
<feature type="turn" evidence="23">
    <location>
        <begin position="903"/>
        <end position="906"/>
    </location>
</feature>
<feature type="helix" evidence="23">
    <location>
        <begin position="907"/>
        <end position="910"/>
    </location>
</feature>
<feature type="strand" evidence="23">
    <location>
        <begin position="928"/>
        <end position="935"/>
    </location>
</feature>
<feature type="strand" evidence="23">
    <location>
        <begin position="938"/>
        <end position="949"/>
    </location>
</feature>
<feature type="strand" evidence="23">
    <location>
        <begin position="960"/>
        <end position="962"/>
    </location>
</feature>
<feature type="helix" evidence="23">
    <location>
        <begin position="967"/>
        <end position="988"/>
    </location>
</feature>
<feature type="helix" evidence="23">
    <location>
        <begin position="994"/>
        <end position="996"/>
    </location>
</feature>
<feature type="strand" evidence="23">
    <location>
        <begin position="1000"/>
        <end position="1003"/>
    </location>
</feature>
<feature type="helix" evidence="23">
    <location>
        <begin position="1017"/>
        <end position="1029"/>
    </location>
</feature>
<feature type="strand" evidence="23">
    <location>
        <begin position="1037"/>
        <end position="1039"/>
    </location>
</feature>
<feature type="strand" evidence="23">
    <location>
        <begin position="1041"/>
        <end position="1043"/>
    </location>
</feature>
<feature type="strand" evidence="23">
    <location>
        <begin position="1048"/>
        <end position="1050"/>
    </location>
</feature>
<feature type="helix" evidence="23">
    <location>
        <begin position="1055"/>
        <end position="1064"/>
    </location>
</feature>
<feature type="strand" evidence="23">
    <location>
        <begin position="1068"/>
        <end position="1073"/>
    </location>
</feature>
<feature type="helix" evidence="23">
    <location>
        <begin position="1074"/>
        <end position="1076"/>
    </location>
</feature>
<feature type="helix" evidence="23">
    <location>
        <begin position="1077"/>
        <end position="1082"/>
    </location>
</feature>
<feature type="helix" evidence="23">
    <location>
        <begin position="1085"/>
        <end position="1088"/>
    </location>
</feature>
<feature type="strand" evidence="23">
    <location>
        <begin position="1092"/>
        <end position="1098"/>
    </location>
</feature>
<feature type="helix" evidence="23">
    <location>
        <begin position="1099"/>
        <end position="1106"/>
    </location>
</feature>
<feature type="turn" evidence="23">
    <location>
        <begin position="1112"/>
        <end position="1114"/>
    </location>
</feature>
<feature type="strand" evidence="23">
    <location>
        <begin position="1115"/>
        <end position="1119"/>
    </location>
</feature>
<feature type="helix" evidence="23">
    <location>
        <begin position="1120"/>
        <end position="1128"/>
    </location>
</feature>
<proteinExistence type="evidence at protein level"/>
<organism>
    <name type="scientific">Saccharomyces cerevisiae (strain ATCC 204508 / S288c)</name>
    <name type="common">Baker's yeast</name>
    <dbReference type="NCBI Taxonomy" id="559292"/>
    <lineage>
        <taxon>Eukaryota</taxon>
        <taxon>Fungi</taxon>
        <taxon>Dikarya</taxon>
        <taxon>Ascomycota</taxon>
        <taxon>Saccharomycotina</taxon>
        <taxon>Saccharomycetes</taxon>
        <taxon>Saccharomycetales</taxon>
        <taxon>Saccharomycetaceae</taxon>
        <taxon>Saccharomyces</taxon>
    </lineage>
</organism>
<protein>
    <recommendedName>
        <fullName evidence="1">Lon protease homolog, mitochondrial</fullName>
        <ecNumber evidence="1 12">3.4.21.53</ecNumber>
    </recommendedName>
</protein>
<reference key="1">
    <citation type="journal article" date="1994" name="J. Biol. Chem.">
        <title>PIM1 encodes a mitochondrial ATP-dependent protease that is required for mitochondrial function in the yeast Saccharomyces cerevisiae.</title>
        <authorList>
            <person name="van Dyck L."/>
            <person name="Pearce D.A."/>
            <person name="Sherman F."/>
        </authorList>
    </citation>
    <scope>NUCLEOTIDE SEQUENCE [GENOMIC DNA]</scope>
    <scope>FUNCTION</scope>
    <source>
        <strain>ATCC 204508 / S288c</strain>
    </source>
</reference>
<reference key="2">
    <citation type="journal article" date="1994" name="Science">
        <title>Requirement for the yeast gene LON in intramitochondrial proteolysis and maintenance of respiration.</title>
        <authorList>
            <person name="Suzuki C.K."/>
            <person name="Suda K."/>
            <person name="Wang N."/>
            <person name="Schatz G."/>
        </authorList>
    </citation>
    <scope>NUCLEOTIDE SEQUENCE [MRNA]</scope>
    <scope>FUNCTION</scope>
</reference>
<reference key="3">
    <citation type="journal article" date="1994" name="Science">
        <authorList>
            <person name="Suzuki C.K."/>
            <person name="Suda K."/>
            <person name="Wang N."/>
            <person name="Schatz G."/>
        </authorList>
    </citation>
    <scope>ERRATUM OF PUBMED:8146662</scope>
</reference>
<reference key="4">
    <citation type="journal article" date="1994" name="EMBO J.">
        <title>Complete DNA sequence of yeast chromosome II.</title>
        <authorList>
            <person name="Feldmann H."/>
            <person name="Aigle M."/>
            <person name="Aljinovic G."/>
            <person name="Andre B."/>
            <person name="Baclet M.C."/>
            <person name="Barthe C."/>
            <person name="Baur A."/>
            <person name="Becam A.-M."/>
            <person name="Biteau N."/>
            <person name="Boles E."/>
            <person name="Brandt T."/>
            <person name="Brendel M."/>
            <person name="Brueckner M."/>
            <person name="Bussereau F."/>
            <person name="Christiansen C."/>
            <person name="Contreras R."/>
            <person name="Crouzet M."/>
            <person name="Cziepluch C."/>
            <person name="Demolis N."/>
            <person name="Delaveau T."/>
            <person name="Doignon F."/>
            <person name="Domdey H."/>
            <person name="Duesterhus S."/>
            <person name="Dubois E."/>
            <person name="Dujon B."/>
            <person name="El Bakkoury M."/>
            <person name="Entian K.-D."/>
            <person name="Feuermann M."/>
            <person name="Fiers W."/>
            <person name="Fobo G.M."/>
            <person name="Fritz C."/>
            <person name="Gassenhuber J."/>
            <person name="Glansdorff N."/>
            <person name="Goffeau A."/>
            <person name="Grivell L.A."/>
            <person name="de Haan M."/>
            <person name="Hein C."/>
            <person name="Herbert C.J."/>
            <person name="Hollenberg C.P."/>
            <person name="Holmstroem K."/>
            <person name="Jacq C."/>
            <person name="Jacquet M."/>
            <person name="Jauniaux J.-C."/>
            <person name="Jonniaux J.-L."/>
            <person name="Kallesoee T."/>
            <person name="Kiesau P."/>
            <person name="Kirchrath L."/>
            <person name="Koetter P."/>
            <person name="Korol S."/>
            <person name="Liebl S."/>
            <person name="Logghe M."/>
            <person name="Lohan A.J.E."/>
            <person name="Louis E.J."/>
            <person name="Li Z.Y."/>
            <person name="Maat M.J."/>
            <person name="Mallet L."/>
            <person name="Mannhaupt G."/>
            <person name="Messenguy F."/>
            <person name="Miosga T."/>
            <person name="Molemans F."/>
            <person name="Mueller S."/>
            <person name="Nasr F."/>
            <person name="Obermaier B."/>
            <person name="Perea J."/>
            <person name="Pierard A."/>
            <person name="Piravandi E."/>
            <person name="Pohl F.M."/>
            <person name="Pohl T.M."/>
            <person name="Potier S."/>
            <person name="Proft M."/>
            <person name="Purnelle B."/>
            <person name="Ramezani Rad M."/>
            <person name="Rieger M."/>
            <person name="Rose M."/>
            <person name="Schaaff-Gerstenschlaeger I."/>
            <person name="Scherens B."/>
            <person name="Schwarzlose C."/>
            <person name="Skala J."/>
            <person name="Slonimski P.P."/>
            <person name="Smits P.H.M."/>
            <person name="Souciet J.-L."/>
            <person name="Steensma H.Y."/>
            <person name="Stucka R."/>
            <person name="Urrestarazu L.A."/>
            <person name="van der Aart Q.J.M."/>
            <person name="Van Dyck L."/>
            <person name="Vassarotti A."/>
            <person name="Vetter I."/>
            <person name="Vierendeels F."/>
            <person name="Vissers S."/>
            <person name="Wagner G."/>
            <person name="de Wergifosse P."/>
            <person name="Wolfe K.H."/>
            <person name="Zagulski M."/>
            <person name="Zimmermann F.K."/>
            <person name="Mewes H.-W."/>
            <person name="Kleine K."/>
        </authorList>
    </citation>
    <scope>NUCLEOTIDE SEQUENCE [LARGE SCALE GENOMIC DNA]</scope>
    <source>
        <strain>ATCC 204508 / S288c</strain>
    </source>
</reference>
<reference key="5">
    <citation type="journal article" date="2014" name="G3 (Bethesda)">
        <title>The reference genome sequence of Saccharomyces cerevisiae: Then and now.</title>
        <authorList>
            <person name="Engel S.R."/>
            <person name="Dietrich F.S."/>
            <person name="Fisk D.G."/>
            <person name="Binkley G."/>
            <person name="Balakrishnan R."/>
            <person name="Costanzo M.C."/>
            <person name="Dwight S.S."/>
            <person name="Hitz B.C."/>
            <person name="Karra K."/>
            <person name="Nash R.S."/>
            <person name="Weng S."/>
            <person name="Wong E.D."/>
            <person name="Lloyd P."/>
            <person name="Skrzypek M.S."/>
            <person name="Miyasato S.R."/>
            <person name="Simison M."/>
            <person name="Cherry J.M."/>
        </authorList>
    </citation>
    <scope>GENOME REANNOTATION</scope>
    <source>
        <strain>ATCC 204508 / S288c</strain>
    </source>
</reference>
<reference key="6">
    <citation type="journal article" date="1988" name="Mol. Cell. Biol.">
        <title>The HAP3 regulatory locus of Saccharomyces cerevisiae encodes divergent overlapping transcripts.</title>
        <authorList>
            <person name="Hahn S."/>
            <person name="Pinkham J."/>
            <person name="Wei R."/>
            <person name="Miller R."/>
            <person name="Guarente L."/>
        </authorList>
    </citation>
    <scope>NUCLEOTIDE SEQUENCE [GENOMIC DNA] OF 1-216</scope>
    <source>
        <strain>ATCC MYA-3516 / BWG1-7A</strain>
    </source>
</reference>
<reference key="7">
    <citation type="journal article" date="1997" name="EMBO J.">
        <title>Autocatalytic processing of the ATP-dependent PIM1 protease: crucial function of a pro-region for sorting to mitochondria.</title>
        <authorList>
            <person name="Wagner I."/>
            <person name="van Dyck L."/>
            <person name="Savel'ev A.S."/>
            <person name="Neupert W."/>
            <person name="Langer T."/>
        </authorList>
    </citation>
    <scope>PROTEIN SEQUENCE OF N-TERMINUS</scope>
    <scope>FUNCTION</scope>
    <scope>MUTAGENESIS OF LYS-638 AND SER-1015</scope>
    <scope>AUTOCATALYTIC PROCESSING</scope>
    <scope>SUBCELLULAR LOCATION</scope>
</reference>
<reference key="8">
    <citation type="journal article" date="1998" name="Proc. Natl. Acad. Sci. U.S.A.">
        <title>The ATPase and protease domains of yeast mitochondrial Lon: roles in proteolysis and respiration-dependent growth.</title>
        <authorList>
            <person name="van Dijl J.M."/>
            <person name="Kutejova E."/>
            <person name="Suda K."/>
            <person name="Perecko D."/>
            <person name="Schatz G."/>
            <person name="Suzuki C.K."/>
        </authorList>
    </citation>
    <scope>PROTEIN SEQUENCE OF N-TERMINUS</scope>
    <scope>FUNCTION</scope>
    <scope>SUBUNIT</scope>
</reference>
<reference key="9">
    <citation type="journal article" date="1993" name="FEBS Lett.">
        <title>Yeast mitochondrial ATP-dependent protease: purification and comparison with the homologous rat enzyme and the bacterial ATP-dependent protease La.</title>
        <authorList>
            <person name="Kutejova E."/>
            <person name="Durcova G."/>
            <person name="Surovkova E."/>
            <person name="Kuzela S."/>
        </authorList>
    </citation>
    <scope>FUNCTION</scope>
    <scope>BIOPHYSICOCHEMICAL PROPERTIES</scope>
    <scope>SUBUNIT</scope>
</reference>
<reference key="10">
    <citation type="journal article" date="1996" name="Science">
        <title>Promotion of mitochondrial membrane complex assembly by a proteolytically inactive yeast Lon.</title>
        <authorList>
            <person name="Rep M."/>
            <person name="van Dijl J.M."/>
            <person name="Suda K."/>
            <person name="Schatz G."/>
            <person name="Grivell L.A."/>
            <person name="Suzuki C.K."/>
        </authorList>
    </citation>
    <scope>FUNCTION</scope>
    <scope>MUTAGENESIS OF LYS-638 AND SER-1015</scope>
</reference>
<reference key="11">
    <citation type="journal article" date="1997" name="Science">
        <authorList>
            <person name="Rep M."/>
            <person name="van Dijl J.M."/>
            <person name="Suda K."/>
            <person name="Schatz G."/>
            <person name="Grivell L.A."/>
            <person name="Suzuki C.K."/>
        </authorList>
    </citation>
    <scope>ERRATUM OF PUBMED:8810243</scope>
</reference>
<reference key="12">
    <citation type="journal article" date="1999" name="Proc. Natl. Acad. Sci. U.S.A.">
        <title>Mitochondrial Lon of Saccharomyces cerevisiae is a ring-shaped protease with seven flexible subunits.</title>
        <authorList>
            <person name="Stahlberg H."/>
            <person name="Kutejova E."/>
            <person name="Suda K."/>
            <person name="Wolpensinger B."/>
            <person name="Lustig A."/>
            <person name="Schatz G."/>
            <person name="Engel A."/>
            <person name="Suzuki C.K."/>
        </authorList>
    </citation>
    <scope>SUBUNIT</scope>
</reference>
<reference key="13">
    <citation type="journal article" date="2003" name="Nature">
        <title>Global analysis of protein localization in budding yeast.</title>
        <authorList>
            <person name="Huh W.-K."/>
            <person name="Falvo J.V."/>
            <person name="Gerke L.C."/>
            <person name="Carroll A.S."/>
            <person name="Howson R.W."/>
            <person name="Weissman J.S."/>
            <person name="O'Shea E.K."/>
        </authorList>
    </citation>
    <scope>SUBCELLULAR LOCATION [LARGE SCALE ANALYSIS]</scope>
</reference>
<reference key="14">
    <citation type="journal article" date="2003" name="Nature">
        <title>Global analysis of protein expression in yeast.</title>
        <authorList>
            <person name="Ghaemmaghami S."/>
            <person name="Huh W.-K."/>
            <person name="Bower K."/>
            <person name="Howson R.W."/>
            <person name="Belle A."/>
            <person name="Dephoure N."/>
            <person name="O'Shea E.K."/>
            <person name="Weissman J.S."/>
        </authorList>
    </citation>
    <scope>LEVEL OF PROTEIN EXPRESSION [LARGE SCALE ANALYSIS]</scope>
</reference>
<reference key="15">
    <citation type="journal article" date="2005" name="J. Biol. Chem.">
        <title>Cleavage site selection within a folded substrate by the ATP-dependent lon protease.</title>
        <authorList>
            <person name="Ondrovicova G."/>
            <person name="Liu T."/>
            <person name="Singh K."/>
            <person name="Tian B."/>
            <person name="Li H."/>
            <person name="Gakh O."/>
            <person name="Perecko D."/>
            <person name="Janata J."/>
            <person name="Granot Z."/>
            <person name="Orly J."/>
            <person name="Kutejova E."/>
            <person name="Suzuki C.K."/>
        </authorList>
    </citation>
    <scope>FUNCTION</scope>
</reference>
<reference key="16">
    <citation type="journal article" date="2006" name="Mol. Cell. Biol.">
        <title>Proteomic analysis of mitochondrial protein turnover: identification of novel substrate proteins of the matrix protease pim1.</title>
        <authorList>
            <person name="Major T."/>
            <person name="von Janowsky B."/>
            <person name="Ruppert T."/>
            <person name="Mogk A."/>
            <person name="Voos W."/>
        </authorList>
    </citation>
    <scope>FUNCTION</scope>
    <scope>SUBSTRATE</scope>
</reference>
<reference key="17">
    <citation type="journal article" date="2010" name="J. Biol. Chem.">
        <title>Identification of novel oxidized protein substrates and physiological partners of the mitochondrial ATP-dependent Lon-like protease Pim1.</title>
        <authorList>
            <person name="Bayot A."/>
            <person name="Gareil M."/>
            <person name="Rogowska-Wrzesinska A."/>
            <person name="Roepstorff P."/>
            <person name="Friguet B."/>
            <person name="Bulteau A.L."/>
        </authorList>
    </citation>
    <scope>SUBSTRATE</scope>
</reference>
<reference key="18">
    <citation type="journal article" date="2017" name="Sci. Rep.">
        <title>The role of Lon-mediated proteolysis in the dynamics of mitochondrial nucleic acid-protein complexes.</title>
        <authorList>
            <person name="Kunova N."/>
            <person name="Ondrovicova G."/>
            <person name="Bauer J.A."/>
            <person name="Bellova J."/>
            <person name="Ambro L."/>
            <person name="Martinakova L."/>
            <person name="Kotrasova V."/>
            <person name="Kutejova E."/>
            <person name="Pevala V."/>
        </authorList>
    </citation>
    <scope>SUBSTRATE</scope>
</reference>
<reference evidence="22" key="19">
    <citation type="journal article" date="2022" name="J. Biol. Chem.">
        <title>Cryo-EM structure of hexameric yeast Lon protease (PIM1) highlights the importance of conserved structural elements.</title>
        <authorList>
            <person name="Yang J."/>
            <person name="Song A.S."/>
            <person name="Wiseman R.L."/>
            <person name="Lander G.C."/>
        </authorList>
    </citation>
    <scope>STRUCTURE BY ELECTRON MICROSCOPY (3.30 ANGSTROMS) OF 182-1133 IN COMPLEX WITH ADP; ATP AND SUBSTRATE</scope>
    <scope>FUNCTION</scope>
    <scope>CATALYTIC ACTIVITY</scope>
    <scope>SUBUNIT</scope>
    <scope>MUTAGENESIS OF SER-1015</scope>
</reference>
<name>LONM_YEAST</name>
<sequence>MLRTRTTKTLSTVARTTRAIQYYRSIAKTAAVSQRRFASTLTVRDVENIKPSHIIKSPTWQEFQHQLKDPRYMEHFAQLDAQFARHFMATNSGKSILAKDDSTSQKKDEDVKIVPDEKDTDNDVEPTRDDEIVNKDQEGEASKNSRSSASGGGQSSSSRSDSGDGSSKQKPPKDVPEVYPQMLALPIARRPLFPGFYKAVVISDERVMKAIKEMLDRQQPYIGAFMLKNSEEDTDVITDKNDVYDVGVLAQITSAFPSKDEKTGTETMTALLYPHRRIKIDELFPPNEEKEKSKEQAKDTDTETTVVEDANNPEDQESTSPATPKLEDIVVERIPDSELQHHKRVEATEEESEELDDIQEGEDINPTEFLKNYNVSLVNVLNLEDEPFDRKSPVINALTSEILKVFKEISQLNTMFREQIATFSASIQSATTNIFEEPARLADFAAAVSAGEEDELQDILSSLNIEHRLEKSLLVLKKELMNAELQNKISKDVETKIQKRQREYYLMEQLKGIKRELGIDDGRDKLIDTYKERIKSLKLPDSVQKIFDDEITKLSTLETSMSEFGVIRNYLDWLTSIPWGKHSKEQYSIPRAKKILDEDHYGMVDVKDRILEFIAVGKLLGKVDGKIICFVGPPGVGKTSIGKSIARALNRKFFRFSVGGMTDVAEIKGHRRTYIGALPGRVVQALKKCQTQNPLILIDEIDKIGHGGIHGDPSAALLEVLDPEQNNSFLDNYLDIPIDLSKVLFVCTANSLETIPRPLLDRMEVIELTGYVAEDKVKIAEQYLVPSAKKSAGLENSHVDMTEDAITALMKYYCRESGVRNLKKHIEKIYRKAALQVVKKLSIEDSPTSSADSKPKESVSSEEKAENNAKSSSEKTKDNNSEKTSDDIEALKTSEKINVSISQKNLKDYVGPPVYTTDRLYETTPPGVVMGLAWTNMGGCSLYVESVLEQPLHNCKHPTFERTGQLGDVMKESSRLAYSFAKMYLAQKFPENRFFEKASIHLHCPEGATPKDGPSAGVTMATSFLSLALNKSIDPTVAMTGELTLTGKVLRIGGLREKAVAAKRSGAKTIIFPKDNLNDWEELPDNVKEGLEPLAADWYNDIFQKLFKDVNTKEGNSVWKAEFEILDAKKEKD</sequence>
<comment type="function">
    <text evidence="1 8 9 10 11 12 13 14 15 16 17 18">ATP-dependent serine protease that mediates the selective degradation of misfolded, unassembled or oxidatively damaged polypeptides as well as certain short-lived regulatory proteins in the mitochondrial matrix. May also have a chaperone function in the assembly of inner membrane protein complexes. Participates in the regulation of mitochondrial gene expression and in the maintenance of the integrity of the mitochondrial genome. Binds to mitochondrial DNA in a site-specific manner (PubMed:15870080, PubMed:16428434, PubMed:35143841, PubMed:8146662, PubMed:8276800, PubMed:8354406, PubMed:8810243, PubMed:9405361, PubMed:9724747). Endogenous substrates include ABF2, ACO2, ILV1, ILV2, LSC1, LYS4, MGM101 and several oxidized proteins. The 2 nucleic acid-binding proteins ABF2 and MGM101 are protected from degradation by PIM1 when they are bound to DNA (PubMed:16428434, PubMed:20150421, PubMed:28377575).</text>
</comment>
<comment type="catalytic activity">
    <reaction evidence="1 12">
        <text>Hydrolysis of proteins in presence of ATP.</text>
        <dbReference type="EC" id="3.4.21.53"/>
    </reaction>
</comment>
<comment type="biophysicochemical properties">
    <kinetics>
        <KM evidence="15">40 uM for ATP for ATPase activity</KM>
    </kinetics>
    <phDependence>
        <text evidence="15">Optimum pH is 7.9.</text>
    </phDependence>
</comment>
<comment type="subunit">
    <text evidence="1 5 12 18 20 21">Homohexamer (Probable) (PubMed:35143841). Organized in a ring with a central cavity (PubMed:10359790). The ATP-binding and proteolytic domains (AP-domain) form a hexameric chamber (PubMed:35143841). Oligomerization is independent of its proteolytic activity and the autocatalytic maturation of its subunits (PubMed:9724747).</text>
</comment>
<comment type="subcellular location">
    <subcellularLocation>
        <location evidence="1 6 17">Mitochondrion matrix</location>
    </subcellularLocation>
</comment>
<comment type="miscellaneous">
    <text evidence="7">Present with 14500 molecules/cell in log phase SD medium.</text>
</comment>
<comment type="similarity">
    <text evidence="1">Belongs to the peptidase S16 family.</text>
</comment>
<evidence type="ECO:0000255" key="1">
    <source>
        <dbReference type="HAMAP-Rule" id="MF_03120"/>
    </source>
</evidence>
<evidence type="ECO:0000255" key="2">
    <source>
        <dbReference type="PROSITE-ProRule" id="PRU01122"/>
    </source>
</evidence>
<evidence type="ECO:0000255" key="3">
    <source>
        <dbReference type="PROSITE-ProRule" id="PRU01123"/>
    </source>
</evidence>
<evidence type="ECO:0000256" key="4">
    <source>
        <dbReference type="SAM" id="MobiDB-lite"/>
    </source>
</evidence>
<evidence type="ECO:0000269" key="5">
    <source>
    </source>
</evidence>
<evidence type="ECO:0000269" key="6">
    <source>
    </source>
</evidence>
<evidence type="ECO:0000269" key="7">
    <source>
    </source>
</evidence>
<evidence type="ECO:0000269" key="8">
    <source>
    </source>
</evidence>
<evidence type="ECO:0000269" key="9">
    <source>
    </source>
</evidence>
<evidence type="ECO:0000269" key="10">
    <source>
    </source>
</evidence>
<evidence type="ECO:0000269" key="11">
    <source>
    </source>
</evidence>
<evidence type="ECO:0000269" key="12">
    <source>
    </source>
</evidence>
<evidence type="ECO:0000269" key="13">
    <source>
    </source>
</evidence>
<evidence type="ECO:0000269" key="14">
    <source>
    </source>
</evidence>
<evidence type="ECO:0000269" key="15">
    <source>
    </source>
</evidence>
<evidence type="ECO:0000269" key="16">
    <source>
    </source>
</evidence>
<evidence type="ECO:0000269" key="17">
    <source>
    </source>
</evidence>
<evidence type="ECO:0000269" key="18">
    <source>
    </source>
</evidence>
<evidence type="ECO:0000305" key="19"/>
<evidence type="ECO:0000305" key="20">
    <source>
    </source>
</evidence>
<evidence type="ECO:0000305" key="21">
    <source>
    </source>
</evidence>
<evidence type="ECO:0007744" key="22">
    <source>
        <dbReference type="PDB" id="7SXO"/>
    </source>
</evidence>
<evidence type="ECO:0007829" key="23">
    <source>
        <dbReference type="PDB" id="7SXO"/>
    </source>
</evidence>
<gene>
    <name evidence="1" type="primary">PIM1</name>
    <name type="synonym">LON</name>
    <name type="ordered locus">YBL022C</name>
    <name type="ORF">YBL0440</name>
</gene>
<accession>P36775</accession>
<accession>D6VPX8</accession>
<accession>P13435</accession>
<dbReference type="EC" id="3.4.21.53" evidence="1 12"/>
<dbReference type="EMBL" id="X74544">
    <property type="protein sequence ID" value="CAA52634.1"/>
    <property type="molecule type" value="Genomic_DNA"/>
</dbReference>
<dbReference type="EMBL" id="L28110">
    <property type="protein sequence ID" value="AAA53625.1"/>
    <property type="molecule type" value="mRNA"/>
</dbReference>
<dbReference type="EMBL" id="Z35783">
    <property type="protein sequence ID" value="CAA84841.1"/>
    <property type="molecule type" value="Genomic_DNA"/>
</dbReference>
<dbReference type="EMBL" id="M20318">
    <property type="protein sequence ID" value="AAA53539.1"/>
    <property type="molecule type" value="Genomic_DNA"/>
</dbReference>
<dbReference type="EMBL" id="BK006936">
    <property type="protein sequence ID" value="DAA07098.1"/>
    <property type="molecule type" value="Genomic_DNA"/>
</dbReference>
<dbReference type="PIR" id="S43938">
    <property type="entry name" value="S43938"/>
</dbReference>
<dbReference type="RefSeq" id="NP_009531.1">
    <property type="nucleotide sequence ID" value="NM_001178262.1"/>
</dbReference>
<dbReference type="PDB" id="7SXO">
    <property type="method" value="EM"/>
    <property type="resolution" value="3.30 A"/>
    <property type="chains" value="A/B/C/D/E/F=182-1133"/>
</dbReference>
<dbReference type="PDBsum" id="7SXO"/>
<dbReference type="EMDB" id="EMD-25502"/>
<dbReference type="SMR" id="P36775"/>
<dbReference type="BioGRID" id="32676">
    <property type="interactions" value="264"/>
</dbReference>
<dbReference type="DIP" id="DIP-6629N"/>
<dbReference type="FunCoup" id="P36775">
    <property type="interactions" value="1253"/>
</dbReference>
<dbReference type="IntAct" id="P36775">
    <property type="interactions" value="35"/>
</dbReference>
<dbReference type="STRING" id="4932.YBL022C"/>
<dbReference type="MEROPS" id="S16.010"/>
<dbReference type="GlyGen" id="P36775">
    <property type="glycosylation" value="1 site"/>
</dbReference>
<dbReference type="iPTMnet" id="P36775"/>
<dbReference type="PaxDb" id="4932-YBL022C"/>
<dbReference type="PeptideAtlas" id="P36775"/>
<dbReference type="EnsemblFungi" id="YBL022C_mRNA">
    <property type="protein sequence ID" value="YBL022C"/>
    <property type="gene ID" value="YBL022C"/>
</dbReference>
<dbReference type="GeneID" id="852259"/>
<dbReference type="KEGG" id="sce:YBL022C"/>
<dbReference type="AGR" id="SGD:S000000118"/>
<dbReference type="SGD" id="S000000118">
    <property type="gene designation" value="PIM1"/>
</dbReference>
<dbReference type="VEuPathDB" id="FungiDB:YBL022C"/>
<dbReference type="eggNOG" id="KOG2004">
    <property type="taxonomic scope" value="Eukaryota"/>
</dbReference>
<dbReference type="GeneTree" id="ENSGT00530000063553"/>
<dbReference type="HOGENOM" id="CLU_004109_1_0_1"/>
<dbReference type="InParanoid" id="P36775"/>
<dbReference type="OMA" id="WLTNIPW"/>
<dbReference type="OrthoDB" id="2411602at2759"/>
<dbReference type="BioCyc" id="YEAST:G3O-28925-MONOMER"/>
<dbReference type="BRENDA" id="3.4.21.53">
    <property type="organism ID" value="984"/>
</dbReference>
<dbReference type="Reactome" id="R-SCE-9837999">
    <property type="pathway name" value="Mitochondrial protein degradation"/>
</dbReference>
<dbReference type="BioGRID-ORCS" id="852259">
    <property type="hits" value="6 hits in 10 CRISPR screens"/>
</dbReference>
<dbReference type="PRO" id="PR:P36775"/>
<dbReference type="Proteomes" id="UP000002311">
    <property type="component" value="Chromosome II"/>
</dbReference>
<dbReference type="RNAct" id="P36775">
    <property type="molecule type" value="protein"/>
</dbReference>
<dbReference type="GO" id="GO:0005759">
    <property type="term" value="C:mitochondrial matrix"/>
    <property type="evidence" value="ECO:0000315"/>
    <property type="project" value="SGD"/>
</dbReference>
<dbReference type="GO" id="GO:0005739">
    <property type="term" value="C:mitochondrion"/>
    <property type="evidence" value="ECO:0007005"/>
    <property type="project" value="SGD"/>
</dbReference>
<dbReference type="GO" id="GO:0005524">
    <property type="term" value="F:ATP binding"/>
    <property type="evidence" value="ECO:0007669"/>
    <property type="project" value="UniProtKB-UniRule"/>
</dbReference>
<dbReference type="GO" id="GO:0016887">
    <property type="term" value="F:ATP hydrolysis activity"/>
    <property type="evidence" value="ECO:0007669"/>
    <property type="project" value="UniProtKB-UniRule"/>
</dbReference>
<dbReference type="GO" id="GO:0004176">
    <property type="term" value="F:ATP-dependent peptidase activity"/>
    <property type="evidence" value="ECO:0000315"/>
    <property type="project" value="SGD"/>
</dbReference>
<dbReference type="GO" id="GO:0043565">
    <property type="term" value="F:sequence-specific DNA binding"/>
    <property type="evidence" value="ECO:0007669"/>
    <property type="project" value="UniProtKB-UniRule"/>
</dbReference>
<dbReference type="GO" id="GO:0004252">
    <property type="term" value="F:serine-type endopeptidase activity"/>
    <property type="evidence" value="ECO:0007669"/>
    <property type="project" value="UniProtKB-UniRule"/>
</dbReference>
<dbReference type="GO" id="GO:0003697">
    <property type="term" value="F:single-stranded DNA binding"/>
    <property type="evidence" value="ECO:0000318"/>
    <property type="project" value="GO_Central"/>
</dbReference>
<dbReference type="GO" id="GO:0034599">
    <property type="term" value="P:cellular response to oxidative stress"/>
    <property type="evidence" value="ECO:0007669"/>
    <property type="project" value="UniProtKB-UniRule"/>
</dbReference>
<dbReference type="GO" id="GO:0051131">
    <property type="term" value="P:chaperone-mediated protein complex assembly"/>
    <property type="evidence" value="ECO:0000316"/>
    <property type="project" value="SGD"/>
</dbReference>
<dbReference type="GO" id="GO:0032042">
    <property type="term" value="P:mitochondrial DNA metabolic process"/>
    <property type="evidence" value="ECO:0000304"/>
    <property type="project" value="AgBase"/>
</dbReference>
<dbReference type="GO" id="GO:0141164">
    <property type="term" value="P:mitochondrial protein quality control"/>
    <property type="evidence" value="ECO:0000315"/>
    <property type="project" value="SGD"/>
</dbReference>
<dbReference type="GO" id="GO:0033108">
    <property type="term" value="P:mitochondrial respiratory chain complex assembly"/>
    <property type="evidence" value="ECO:0000304"/>
    <property type="project" value="AgBase"/>
</dbReference>
<dbReference type="GO" id="GO:0007005">
    <property type="term" value="P:mitochondrion organization"/>
    <property type="evidence" value="ECO:0000318"/>
    <property type="project" value="GO_Central"/>
</dbReference>
<dbReference type="GO" id="GO:0070407">
    <property type="term" value="P:oxidation-dependent protein catabolic process"/>
    <property type="evidence" value="ECO:0007669"/>
    <property type="project" value="UniProtKB-UniRule"/>
</dbReference>
<dbReference type="GO" id="GO:0006457">
    <property type="term" value="P:protein folding"/>
    <property type="evidence" value="ECO:0000304"/>
    <property type="project" value="AgBase"/>
</dbReference>
<dbReference type="GO" id="GO:0006515">
    <property type="term" value="P:protein quality control for misfolded or incompletely synthesized proteins"/>
    <property type="evidence" value="ECO:0000318"/>
    <property type="project" value="GO_Central"/>
</dbReference>
<dbReference type="GO" id="GO:1901858">
    <property type="term" value="P:regulation of mitochondrial DNA metabolic process"/>
    <property type="evidence" value="ECO:0000315"/>
    <property type="project" value="SGD"/>
</dbReference>
<dbReference type="GO" id="GO:0009408">
    <property type="term" value="P:response to heat"/>
    <property type="evidence" value="ECO:0000304"/>
    <property type="project" value="AgBase"/>
</dbReference>
<dbReference type="CDD" id="cd19500">
    <property type="entry name" value="RecA-like_Lon"/>
    <property type="match status" value="1"/>
</dbReference>
<dbReference type="FunFam" id="3.40.50.300:FF:000021">
    <property type="entry name" value="Lon protease homolog"/>
    <property type="match status" value="1"/>
</dbReference>
<dbReference type="FunFam" id="1.20.5.5270:FF:000001">
    <property type="entry name" value="Lon protease homolog, mitochondrial"/>
    <property type="match status" value="1"/>
</dbReference>
<dbReference type="FunFam" id="1.20.58.1480:FF:000003">
    <property type="entry name" value="Lon protease homolog, mitochondrial"/>
    <property type="match status" value="1"/>
</dbReference>
<dbReference type="FunFam" id="2.30.130.40:FF:000006">
    <property type="entry name" value="Lon protease homolog, mitochondrial"/>
    <property type="match status" value="1"/>
</dbReference>
<dbReference type="FunFam" id="3.30.230.10:FF:000015">
    <property type="entry name" value="Lon protease homolog, mitochondrial"/>
    <property type="match status" value="1"/>
</dbReference>
<dbReference type="Gene3D" id="1.10.8.60">
    <property type="match status" value="1"/>
</dbReference>
<dbReference type="Gene3D" id="1.20.5.5270">
    <property type="match status" value="1"/>
</dbReference>
<dbReference type="Gene3D" id="1.20.58.1480">
    <property type="match status" value="1"/>
</dbReference>
<dbReference type="Gene3D" id="3.30.230.10">
    <property type="match status" value="1"/>
</dbReference>
<dbReference type="Gene3D" id="2.30.130.40">
    <property type="entry name" value="LON domain-like"/>
    <property type="match status" value="1"/>
</dbReference>
<dbReference type="Gene3D" id="3.40.50.300">
    <property type="entry name" value="P-loop containing nucleotide triphosphate hydrolases"/>
    <property type="match status" value="1"/>
</dbReference>
<dbReference type="HAMAP" id="MF_03120">
    <property type="entry name" value="lonm_euk"/>
    <property type="match status" value="1"/>
</dbReference>
<dbReference type="InterPro" id="IPR003593">
    <property type="entry name" value="AAA+_ATPase"/>
</dbReference>
<dbReference type="InterPro" id="IPR003959">
    <property type="entry name" value="ATPase_AAA_core"/>
</dbReference>
<dbReference type="InterPro" id="IPR004815">
    <property type="entry name" value="Lon_bac/euk-typ"/>
</dbReference>
<dbReference type="InterPro" id="IPR054594">
    <property type="entry name" value="Lon_lid"/>
</dbReference>
<dbReference type="InterPro" id="IPR008269">
    <property type="entry name" value="Lon_proteolytic"/>
</dbReference>
<dbReference type="InterPro" id="IPR027065">
    <property type="entry name" value="Lon_Prtase"/>
</dbReference>
<dbReference type="InterPro" id="IPR003111">
    <property type="entry name" value="Lon_prtase_N"/>
</dbReference>
<dbReference type="InterPro" id="IPR046336">
    <property type="entry name" value="Lon_prtase_N_sf"/>
</dbReference>
<dbReference type="InterPro" id="IPR027503">
    <property type="entry name" value="Lonm_euk"/>
</dbReference>
<dbReference type="InterPro" id="IPR027417">
    <property type="entry name" value="P-loop_NTPase"/>
</dbReference>
<dbReference type="InterPro" id="IPR008268">
    <property type="entry name" value="Peptidase_S16_AS"/>
</dbReference>
<dbReference type="InterPro" id="IPR015947">
    <property type="entry name" value="PUA-like_sf"/>
</dbReference>
<dbReference type="InterPro" id="IPR020568">
    <property type="entry name" value="Ribosomal_Su5_D2-typ_SF"/>
</dbReference>
<dbReference type="InterPro" id="IPR014721">
    <property type="entry name" value="Ribsml_uS5_D2-typ_fold_subgr"/>
</dbReference>
<dbReference type="NCBIfam" id="TIGR00763">
    <property type="entry name" value="lon"/>
    <property type="match status" value="1"/>
</dbReference>
<dbReference type="PANTHER" id="PTHR43718">
    <property type="entry name" value="LON PROTEASE"/>
    <property type="match status" value="1"/>
</dbReference>
<dbReference type="PANTHER" id="PTHR43718:SF2">
    <property type="entry name" value="LON PROTEASE HOMOLOG, MITOCHONDRIAL"/>
    <property type="match status" value="1"/>
</dbReference>
<dbReference type="Pfam" id="PF00004">
    <property type="entry name" value="AAA"/>
    <property type="match status" value="1"/>
</dbReference>
<dbReference type="Pfam" id="PF05362">
    <property type="entry name" value="Lon_C"/>
    <property type="match status" value="1"/>
</dbReference>
<dbReference type="Pfam" id="PF22667">
    <property type="entry name" value="Lon_lid"/>
    <property type="match status" value="1"/>
</dbReference>
<dbReference type="Pfam" id="PF02190">
    <property type="entry name" value="LON_substr_bdg"/>
    <property type="match status" value="1"/>
</dbReference>
<dbReference type="PRINTS" id="PR00830">
    <property type="entry name" value="ENDOLAPTASE"/>
</dbReference>
<dbReference type="SMART" id="SM00382">
    <property type="entry name" value="AAA"/>
    <property type="match status" value="1"/>
</dbReference>
<dbReference type="SMART" id="SM00464">
    <property type="entry name" value="LON"/>
    <property type="match status" value="1"/>
</dbReference>
<dbReference type="SUPFAM" id="SSF52540">
    <property type="entry name" value="P-loop containing nucleoside triphosphate hydrolases"/>
    <property type="match status" value="1"/>
</dbReference>
<dbReference type="SUPFAM" id="SSF88697">
    <property type="entry name" value="PUA domain-like"/>
    <property type="match status" value="1"/>
</dbReference>
<dbReference type="SUPFAM" id="SSF54211">
    <property type="entry name" value="Ribosomal protein S5 domain 2-like"/>
    <property type="match status" value="1"/>
</dbReference>
<dbReference type="PROSITE" id="PS51787">
    <property type="entry name" value="LON_N"/>
    <property type="match status" value="1"/>
</dbReference>
<dbReference type="PROSITE" id="PS51786">
    <property type="entry name" value="LON_PROTEOLYTIC"/>
    <property type="match status" value="1"/>
</dbReference>
<dbReference type="PROSITE" id="PS01046">
    <property type="entry name" value="LON_SER"/>
    <property type="match status" value="1"/>
</dbReference>